<feature type="signal peptide" evidence="1">
    <location>
        <begin position="1"/>
        <end position="20"/>
    </location>
</feature>
<feature type="chain" id="PRO_5000077345" description="LPS-assembly protein LptD">
    <location>
        <begin position="21"/>
        <end position="797"/>
    </location>
</feature>
<feature type="region of interest" description="Disordered" evidence="2">
    <location>
        <begin position="23"/>
        <end position="45"/>
    </location>
</feature>
<proteinExistence type="inferred from homology"/>
<protein>
    <recommendedName>
        <fullName evidence="1">LPS-assembly protein LptD</fullName>
    </recommendedName>
</protein>
<comment type="function">
    <text evidence="1">Together with LptE, is involved in the assembly of lipopolysaccharide (LPS) at the surface of the outer membrane.</text>
</comment>
<comment type="subunit">
    <text evidence="1">Component of the lipopolysaccharide transport and assembly complex. Interacts with LptE and LptA.</text>
</comment>
<comment type="subcellular location">
    <subcellularLocation>
        <location evidence="1">Cell outer membrane</location>
    </subcellularLocation>
</comment>
<comment type="similarity">
    <text evidence="1">Belongs to the LptD family.</text>
</comment>
<dbReference type="EMBL" id="AM167904">
    <property type="protein sequence ID" value="CAJ48300.1"/>
    <property type="molecule type" value="Genomic_DNA"/>
</dbReference>
<dbReference type="RefSeq" id="WP_039051446.1">
    <property type="nucleotide sequence ID" value="NC_010645.1"/>
</dbReference>
<dbReference type="SMR" id="Q2KXA8"/>
<dbReference type="STRING" id="360910.BAV0694"/>
<dbReference type="KEGG" id="bav:BAV0694"/>
<dbReference type="eggNOG" id="COG1452">
    <property type="taxonomic scope" value="Bacteria"/>
</dbReference>
<dbReference type="HOGENOM" id="CLU_009039_0_0_4"/>
<dbReference type="OrthoDB" id="9760225at2"/>
<dbReference type="Proteomes" id="UP000001977">
    <property type="component" value="Chromosome"/>
</dbReference>
<dbReference type="GO" id="GO:0009279">
    <property type="term" value="C:cell outer membrane"/>
    <property type="evidence" value="ECO:0007669"/>
    <property type="project" value="UniProtKB-SubCell"/>
</dbReference>
<dbReference type="GO" id="GO:1990351">
    <property type="term" value="C:transporter complex"/>
    <property type="evidence" value="ECO:0007669"/>
    <property type="project" value="TreeGrafter"/>
</dbReference>
<dbReference type="GO" id="GO:0043165">
    <property type="term" value="P:Gram-negative-bacterium-type cell outer membrane assembly"/>
    <property type="evidence" value="ECO:0007669"/>
    <property type="project" value="UniProtKB-UniRule"/>
</dbReference>
<dbReference type="GO" id="GO:0015920">
    <property type="term" value="P:lipopolysaccharide transport"/>
    <property type="evidence" value="ECO:0007669"/>
    <property type="project" value="InterPro"/>
</dbReference>
<dbReference type="HAMAP" id="MF_01411">
    <property type="entry name" value="LPS_assembly_LptD"/>
    <property type="match status" value="1"/>
</dbReference>
<dbReference type="InterPro" id="IPR020889">
    <property type="entry name" value="LipoPS_assembly_LptD"/>
</dbReference>
<dbReference type="InterPro" id="IPR050218">
    <property type="entry name" value="LptD"/>
</dbReference>
<dbReference type="InterPro" id="IPR007543">
    <property type="entry name" value="LptD_C"/>
</dbReference>
<dbReference type="PANTHER" id="PTHR30189">
    <property type="entry name" value="LPS-ASSEMBLY PROTEIN"/>
    <property type="match status" value="1"/>
</dbReference>
<dbReference type="PANTHER" id="PTHR30189:SF1">
    <property type="entry name" value="LPS-ASSEMBLY PROTEIN LPTD"/>
    <property type="match status" value="1"/>
</dbReference>
<dbReference type="Pfam" id="PF04453">
    <property type="entry name" value="LptD"/>
    <property type="match status" value="1"/>
</dbReference>
<reference key="1">
    <citation type="journal article" date="2006" name="J. Bacteriol.">
        <title>Comparison of the genome sequence of the poultry pathogen Bordetella avium with those of B. bronchiseptica, B. pertussis, and B. parapertussis reveals extensive diversity in surface structures associated with host interaction.</title>
        <authorList>
            <person name="Sebaihia M."/>
            <person name="Preston A."/>
            <person name="Maskell D.J."/>
            <person name="Kuzmiak H."/>
            <person name="Connell T.D."/>
            <person name="King N.D."/>
            <person name="Orndorff P.E."/>
            <person name="Miyamoto D.M."/>
            <person name="Thomson N.R."/>
            <person name="Harris D."/>
            <person name="Goble A."/>
            <person name="Lord A."/>
            <person name="Murphy L."/>
            <person name="Quail M.A."/>
            <person name="Rutter S."/>
            <person name="Squares R."/>
            <person name="Squares S."/>
            <person name="Woodward J."/>
            <person name="Parkhill J."/>
            <person name="Temple L.M."/>
        </authorList>
    </citation>
    <scope>NUCLEOTIDE SEQUENCE [LARGE SCALE GENOMIC DNA]</scope>
    <source>
        <strain>197N</strain>
    </source>
</reference>
<organism>
    <name type="scientific">Bordetella avium (strain 197N)</name>
    <dbReference type="NCBI Taxonomy" id="360910"/>
    <lineage>
        <taxon>Bacteria</taxon>
        <taxon>Pseudomonadati</taxon>
        <taxon>Pseudomonadota</taxon>
        <taxon>Betaproteobacteria</taxon>
        <taxon>Burkholderiales</taxon>
        <taxon>Alcaligenaceae</taxon>
        <taxon>Bordetella</taxon>
    </lineage>
</organism>
<gene>
    <name evidence="1" type="primary">lptD</name>
    <name type="synonym">imp</name>
    <name type="synonym">ostA</name>
    <name type="ordered locus">BAV0694</name>
</gene>
<evidence type="ECO:0000255" key="1">
    <source>
        <dbReference type="HAMAP-Rule" id="MF_01411"/>
    </source>
</evidence>
<evidence type="ECO:0000256" key="2">
    <source>
        <dbReference type="SAM" id="MobiDB-lite"/>
    </source>
</evidence>
<keyword id="KW-0998">Cell outer membrane</keyword>
<keyword id="KW-0472">Membrane</keyword>
<keyword id="KW-1185">Reference proteome</keyword>
<keyword id="KW-0732">Signal</keyword>
<accession>Q2KXA8</accession>
<name>LPTD_BORA1</name>
<sequence length="797" mass="89058">MHTIRCLILSALSVAGAAQAQGSQDAAPAGRQPVGSVASPGLEMPGLRLSPGLRVRKLTEDQMPAFMEADDMSGEPSAELLLKGNAQVRRVDGVIKGDSIHYDDATSEVEVKGNARILRDATLVTGPSARINLNTYSGDIDKPNFWIGASGGTARAEHADIFSRSQMRLTDVYYSGCPCEKPSWYIKATSLDLDVDENEGVARNGVLYFKDVPILASPYLTFPIRKERKSGFLLPTYGTSSKTGLDISVPYYFNLAPNYDATLISRYMGKRGLQLGGDFRYLGYSYAGSVSGTYLPNDRDAGFDRYMYRLTHKQYLGSGFYTDWDISGVSDDNYYRDMTTLGLNTASTTYLPRQGRVGWSSNYWQTYVQVYKYRTLQDPDAPIVPPYDKEPEIFLQGARYDWNGFDVRMDSTAVRFRRPLFLGNRIGQEGERLEAYPTIAYPIVRAGWYFTPKAGLNYTQYHTSWFNQDWNRLGSLAPYRGTESRTLPIVSLDTGMTFERPTTLFGKDSTQTLEPRLYYLRVPYRNQSALPVYDTSLADFSFEQAFQENIYTGGWDRIANANQLTVGLTTRWLDASTGFQRVALSAAQRLYFEDQRVTLPGETPRENVRSDFLVGASAALTDTLTTDLAAQYNPYDNNWSRGLVSARWTPQRQTTLALAYRYQRDPISNISYAPRGQNQVTLAFQWPFTQRWYGVGRVDYAIRSDTGGVVGASDSARVTQAIAGLEYKGDCCWTGRVVFQRYAVAANDANTAVFFQLELTGLGALGTDPLKLLDKSIPGYQPVSQPTPAGTTFERYE</sequence>